<dbReference type="EC" id="5.3.1.1" evidence="1"/>
<dbReference type="EMBL" id="CP001072">
    <property type="protein sequence ID" value="ACD47656.1"/>
    <property type="molecule type" value="Genomic_DNA"/>
</dbReference>
<dbReference type="RefSeq" id="WP_000160973.1">
    <property type="nucleotide sequence ID" value="NC_010698.2"/>
</dbReference>
<dbReference type="SMR" id="B2US24"/>
<dbReference type="KEGG" id="hps:HPSH_00995"/>
<dbReference type="HOGENOM" id="CLU_024251_2_1_7"/>
<dbReference type="UniPathway" id="UPA00109">
    <property type="reaction ID" value="UER00189"/>
</dbReference>
<dbReference type="UniPathway" id="UPA00138"/>
<dbReference type="GO" id="GO:0005829">
    <property type="term" value="C:cytosol"/>
    <property type="evidence" value="ECO:0007669"/>
    <property type="project" value="TreeGrafter"/>
</dbReference>
<dbReference type="GO" id="GO:0004807">
    <property type="term" value="F:triose-phosphate isomerase activity"/>
    <property type="evidence" value="ECO:0007669"/>
    <property type="project" value="UniProtKB-UniRule"/>
</dbReference>
<dbReference type="GO" id="GO:0006094">
    <property type="term" value="P:gluconeogenesis"/>
    <property type="evidence" value="ECO:0007669"/>
    <property type="project" value="UniProtKB-UniRule"/>
</dbReference>
<dbReference type="GO" id="GO:0046166">
    <property type="term" value="P:glyceraldehyde-3-phosphate biosynthetic process"/>
    <property type="evidence" value="ECO:0007669"/>
    <property type="project" value="TreeGrafter"/>
</dbReference>
<dbReference type="GO" id="GO:0019563">
    <property type="term" value="P:glycerol catabolic process"/>
    <property type="evidence" value="ECO:0007669"/>
    <property type="project" value="TreeGrafter"/>
</dbReference>
<dbReference type="GO" id="GO:0006096">
    <property type="term" value="P:glycolytic process"/>
    <property type="evidence" value="ECO:0007669"/>
    <property type="project" value="UniProtKB-UniRule"/>
</dbReference>
<dbReference type="CDD" id="cd00311">
    <property type="entry name" value="TIM"/>
    <property type="match status" value="1"/>
</dbReference>
<dbReference type="FunFam" id="3.20.20.70:FF:000293">
    <property type="entry name" value="Triosephosphate isomerase"/>
    <property type="match status" value="1"/>
</dbReference>
<dbReference type="Gene3D" id="3.20.20.70">
    <property type="entry name" value="Aldolase class I"/>
    <property type="match status" value="1"/>
</dbReference>
<dbReference type="HAMAP" id="MF_00147_B">
    <property type="entry name" value="TIM_B"/>
    <property type="match status" value="1"/>
</dbReference>
<dbReference type="InterPro" id="IPR013785">
    <property type="entry name" value="Aldolase_TIM"/>
</dbReference>
<dbReference type="InterPro" id="IPR035990">
    <property type="entry name" value="TIM_sf"/>
</dbReference>
<dbReference type="InterPro" id="IPR022896">
    <property type="entry name" value="TrioseP_Isoase_bac/euk"/>
</dbReference>
<dbReference type="InterPro" id="IPR000652">
    <property type="entry name" value="Triosephosphate_isomerase"/>
</dbReference>
<dbReference type="InterPro" id="IPR020861">
    <property type="entry name" value="Triosephosphate_isomerase_AS"/>
</dbReference>
<dbReference type="NCBIfam" id="NF000728">
    <property type="entry name" value="PRK00042.3-2"/>
    <property type="match status" value="1"/>
</dbReference>
<dbReference type="NCBIfam" id="NF000729">
    <property type="entry name" value="PRK00042.3-3"/>
    <property type="match status" value="1"/>
</dbReference>
<dbReference type="PANTHER" id="PTHR21139">
    <property type="entry name" value="TRIOSEPHOSPHATE ISOMERASE"/>
    <property type="match status" value="1"/>
</dbReference>
<dbReference type="PANTHER" id="PTHR21139:SF42">
    <property type="entry name" value="TRIOSEPHOSPHATE ISOMERASE"/>
    <property type="match status" value="1"/>
</dbReference>
<dbReference type="Pfam" id="PF00121">
    <property type="entry name" value="TIM"/>
    <property type="match status" value="1"/>
</dbReference>
<dbReference type="SUPFAM" id="SSF51351">
    <property type="entry name" value="Triosephosphate isomerase (TIM)"/>
    <property type="match status" value="1"/>
</dbReference>
<dbReference type="PROSITE" id="PS00171">
    <property type="entry name" value="TIM_1"/>
    <property type="match status" value="1"/>
</dbReference>
<dbReference type="PROSITE" id="PS51440">
    <property type="entry name" value="TIM_2"/>
    <property type="match status" value="1"/>
</dbReference>
<organism>
    <name type="scientific">Helicobacter pylori (strain Shi470)</name>
    <dbReference type="NCBI Taxonomy" id="512562"/>
    <lineage>
        <taxon>Bacteria</taxon>
        <taxon>Pseudomonadati</taxon>
        <taxon>Campylobacterota</taxon>
        <taxon>Epsilonproteobacteria</taxon>
        <taxon>Campylobacterales</taxon>
        <taxon>Helicobacteraceae</taxon>
        <taxon>Helicobacter</taxon>
    </lineage>
</organism>
<proteinExistence type="inferred from homology"/>
<accession>B2US24</accession>
<reference key="1">
    <citation type="submission" date="2008-05" db="EMBL/GenBank/DDBJ databases">
        <title>Genome sequence of Helicobacter pylori from the remote Amazon: traces of Asian ancestry of the first Americans.</title>
        <authorList>
            <person name="Kersulyte D."/>
            <person name="Kalia A."/>
            <person name="Gilman R.H."/>
            <person name="Berg D.E."/>
        </authorList>
    </citation>
    <scope>NUCLEOTIDE SEQUENCE [LARGE SCALE GENOMIC DNA]</scope>
    <source>
        <strain>Shi470</strain>
    </source>
</reference>
<feature type="chain" id="PRO_1000096505" description="Triosephosphate isomerase">
    <location>
        <begin position="1"/>
        <end position="234"/>
    </location>
</feature>
<feature type="active site" description="Electrophile" evidence="1">
    <location>
        <position position="90"/>
    </location>
</feature>
<feature type="active site" description="Proton acceptor" evidence="1">
    <location>
        <position position="159"/>
    </location>
</feature>
<feature type="binding site" evidence="1">
    <location>
        <begin position="8"/>
        <end position="10"/>
    </location>
    <ligand>
        <name>substrate</name>
    </ligand>
</feature>
<feature type="binding site" evidence="1">
    <location>
        <position position="165"/>
    </location>
    <ligand>
        <name>substrate</name>
    </ligand>
</feature>
<feature type="binding site" evidence="1">
    <location>
        <position position="197"/>
    </location>
    <ligand>
        <name>substrate</name>
    </ligand>
</feature>
<protein>
    <recommendedName>
        <fullName evidence="1">Triosephosphate isomerase</fullName>
        <shortName evidence="1">TIM</shortName>
        <shortName evidence="1">TPI</shortName>
        <ecNumber evidence="1">5.3.1.1</ecNumber>
    </recommendedName>
    <alternativeName>
        <fullName evidence="1">Triose-phosphate isomerase</fullName>
    </alternativeName>
</protein>
<evidence type="ECO:0000255" key="1">
    <source>
        <dbReference type="HAMAP-Rule" id="MF_00147"/>
    </source>
</evidence>
<gene>
    <name evidence="1" type="primary">tpiA</name>
    <name type="ordered locus">HPSH_00995</name>
</gene>
<sequence>MTKIAMANFKSAMPIFKSHAYLEELEKTLKPQHFDRVFVFPDFLGLLPNSFLHFTLGAQNAYPKDCGAFTGEITSQHLEELKINTLLIGHSERRLLLKESPSFLKEKFDFFKSKNFKIVYCIGEELTTREKGFKAVKEFLNEQLENIDLNYPNLVVAYEPIWAIGTKKSASLEDIYLTHGFLKQILNQKTPLLYGGSVNAQNAKEILGIDSVDGLLIGSASLELENFKTIISFL</sequence>
<keyword id="KW-0963">Cytoplasm</keyword>
<keyword id="KW-0312">Gluconeogenesis</keyword>
<keyword id="KW-0324">Glycolysis</keyword>
<keyword id="KW-0413">Isomerase</keyword>
<name>TPIS_HELPS</name>
<comment type="function">
    <text evidence="1">Involved in the gluconeogenesis. Catalyzes stereospecifically the conversion of dihydroxyacetone phosphate (DHAP) to D-glyceraldehyde-3-phosphate (G3P).</text>
</comment>
<comment type="catalytic activity">
    <reaction evidence="1">
        <text>D-glyceraldehyde 3-phosphate = dihydroxyacetone phosphate</text>
        <dbReference type="Rhea" id="RHEA:18585"/>
        <dbReference type="ChEBI" id="CHEBI:57642"/>
        <dbReference type="ChEBI" id="CHEBI:59776"/>
        <dbReference type="EC" id="5.3.1.1"/>
    </reaction>
</comment>
<comment type="pathway">
    <text evidence="1">Carbohydrate biosynthesis; gluconeogenesis.</text>
</comment>
<comment type="pathway">
    <text evidence="1">Carbohydrate degradation; glycolysis; D-glyceraldehyde 3-phosphate from glycerone phosphate: step 1/1.</text>
</comment>
<comment type="subunit">
    <text evidence="1">Homodimer.</text>
</comment>
<comment type="subcellular location">
    <subcellularLocation>
        <location evidence="1">Cytoplasm</location>
    </subcellularLocation>
</comment>
<comment type="similarity">
    <text evidence="1">Belongs to the triosephosphate isomerase family.</text>
</comment>